<keyword id="KW-0963">Cytoplasm</keyword>
<keyword id="KW-0444">Lipid biosynthesis</keyword>
<keyword id="KW-0443">Lipid metabolism</keyword>
<keyword id="KW-0460">Magnesium</keyword>
<keyword id="KW-0479">Metal-binding</keyword>
<keyword id="KW-1185">Reference proteome</keyword>
<keyword id="KW-0808">Transferase</keyword>
<comment type="function">
    <text evidence="3">Catalyzes the condensation of isopentenyl pyrophosphate (IPP) with geranyl diphosphate (GPP) to yield (2E,6E)-farnesyl diphosphate (E,E-FPP). May be used for squalene and possibly sterol biosynthesis.</text>
</comment>
<comment type="catalytic activity">
    <reaction evidence="3">
        <text>isopentenyl diphosphate + (2E)-geranyl diphosphate = (2E,6E)-farnesyl diphosphate + diphosphate</text>
        <dbReference type="Rhea" id="RHEA:19361"/>
        <dbReference type="ChEBI" id="CHEBI:33019"/>
        <dbReference type="ChEBI" id="CHEBI:58057"/>
        <dbReference type="ChEBI" id="CHEBI:128769"/>
        <dbReference type="ChEBI" id="CHEBI:175763"/>
        <dbReference type="EC" id="2.5.1.10"/>
    </reaction>
</comment>
<comment type="cofactor">
    <cofactor evidence="3">
        <name>Mg(2+)</name>
        <dbReference type="ChEBI" id="CHEBI:18420"/>
    </cofactor>
    <text evidence="3">Binds 2 Mg(2+) ions per subunit.</text>
</comment>
<comment type="pathway">
    <text evidence="3">Isoprenoid biosynthesis; farnesyl diphosphate biosynthesis; farnesyl diphosphate from geranyl diphosphate and isopentenyl diphosphate.</text>
</comment>
<comment type="subcellular location">
    <subcellularLocation>
        <location evidence="3">Cytoplasm</location>
    </subcellularLocation>
</comment>
<comment type="similarity">
    <text evidence="6">Belongs to the FPP/GGPP synthase family.</text>
</comment>
<evidence type="ECO:0000250" key="1"/>
<evidence type="ECO:0000250" key="2">
    <source>
        <dbReference type="UniProtKB" id="P14324"/>
    </source>
</evidence>
<evidence type="ECO:0000250" key="3">
    <source>
        <dbReference type="UniProtKB" id="P9WKH1"/>
    </source>
</evidence>
<evidence type="ECO:0000250" key="4">
    <source>
        <dbReference type="UniProtKB" id="Q12051"/>
    </source>
</evidence>
<evidence type="ECO:0000256" key="5">
    <source>
        <dbReference type="SAM" id="MobiDB-lite"/>
    </source>
</evidence>
<evidence type="ECO:0000305" key="6"/>
<accession>P9WKH0</accession>
<accession>L0TFH9</accession>
<accession>P0A5H8</accession>
<accession>Q50727</accession>
<dbReference type="EC" id="2.5.1.10" evidence="3"/>
<dbReference type="EMBL" id="AE000516">
    <property type="protein sequence ID" value="AAK47843.1"/>
    <property type="molecule type" value="Genomic_DNA"/>
</dbReference>
<dbReference type="PIR" id="C70735">
    <property type="entry name" value="C70735"/>
</dbReference>
<dbReference type="SMR" id="P9WKH0"/>
<dbReference type="KEGG" id="mtc:MT3506"/>
<dbReference type="PATRIC" id="fig|83331.31.peg.3763"/>
<dbReference type="HOGENOM" id="CLU_014015_2_1_11"/>
<dbReference type="Proteomes" id="UP000001020">
    <property type="component" value="Chromosome"/>
</dbReference>
<dbReference type="GO" id="GO:0005737">
    <property type="term" value="C:cytoplasm"/>
    <property type="evidence" value="ECO:0007669"/>
    <property type="project" value="UniProtKB-SubCell"/>
</dbReference>
<dbReference type="GO" id="GO:0004337">
    <property type="term" value="F:(2E,6E)-farnesyl diphosphate synthase activity"/>
    <property type="evidence" value="ECO:0007669"/>
    <property type="project" value="UniProtKB-EC"/>
</dbReference>
<dbReference type="GO" id="GO:0046872">
    <property type="term" value="F:metal ion binding"/>
    <property type="evidence" value="ECO:0007669"/>
    <property type="project" value="UniProtKB-KW"/>
</dbReference>
<dbReference type="GO" id="GO:0008299">
    <property type="term" value="P:isoprenoid biosynthetic process"/>
    <property type="evidence" value="ECO:0007669"/>
    <property type="project" value="InterPro"/>
</dbReference>
<dbReference type="CDD" id="cd00685">
    <property type="entry name" value="Trans_IPPS_HT"/>
    <property type="match status" value="1"/>
</dbReference>
<dbReference type="Gene3D" id="1.10.600.10">
    <property type="entry name" value="Farnesyl Diphosphate Synthase"/>
    <property type="match status" value="1"/>
</dbReference>
<dbReference type="InterPro" id="IPR008949">
    <property type="entry name" value="Isoprenoid_synthase_dom_sf"/>
</dbReference>
<dbReference type="InterPro" id="IPR000092">
    <property type="entry name" value="Polyprenyl_synt"/>
</dbReference>
<dbReference type="InterPro" id="IPR033749">
    <property type="entry name" value="Polyprenyl_synt_CS"/>
</dbReference>
<dbReference type="PANTHER" id="PTHR12001:SF71">
    <property type="entry name" value="(2E,6E)-FARNESYL DIPHOSPHATE SYNTHASE"/>
    <property type="match status" value="1"/>
</dbReference>
<dbReference type="PANTHER" id="PTHR12001">
    <property type="entry name" value="GERANYLGERANYL PYROPHOSPHATE SYNTHASE"/>
    <property type="match status" value="1"/>
</dbReference>
<dbReference type="Pfam" id="PF00348">
    <property type="entry name" value="polyprenyl_synt"/>
    <property type="match status" value="1"/>
</dbReference>
<dbReference type="SFLD" id="SFLDS00005">
    <property type="entry name" value="Isoprenoid_Synthase_Type_I"/>
    <property type="match status" value="1"/>
</dbReference>
<dbReference type="SFLD" id="SFLDG01017">
    <property type="entry name" value="Polyprenyl_Transferase_Like"/>
    <property type="match status" value="1"/>
</dbReference>
<dbReference type="SUPFAM" id="SSF48576">
    <property type="entry name" value="Terpenoid synthases"/>
    <property type="match status" value="1"/>
</dbReference>
<dbReference type="PROSITE" id="PS00723">
    <property type="entry name" value="POLYPRENYL_SYNTHASE_1"/>
    <property type="match status" value="1"/>
</dbReference>
<dbReference type="PROSITE" id="PS00444">
    <property type="entry name" value="POLYPRENYL_SYNTHASE_2"/>
    <property type="match status" value="1"/>
</dbReference>
<sequence>MRGTDEKYGLPPQPDSDRMTRRTLPVLGLAHELITPTLRQMADRLDPHMRPVVSYHLGWSDERGRPVNNNCGKAIRPALVFVAAEAAGADPHSAIPGAVSVELVHNFSLVHDDLMDRDEHRRHRPTVWALWGDAMALLAGDAMLSLAHEVLLDCDSPHVGAALRAISEATRELIRGQAADTAFESRTDVALDECLKMAEGKTAALMAASAEVGALLAGAPRSVREALVAYGRHIGLAFQLVDDLLGIWGRPEITGKPVYSDLRSRKKTLPVTWTVAHGGSAGRRLAAWLVDETGSQTASDDELAAVAELIECGGGRRWASAEARRHVTQGIDMVARIGIPDRPAAELQDLAHYIVDRQA</sequence>
<feature type="chain" id="PRO_0000427655" description="(2E,6E)-farnesyl diphosphate synthase">
    <location>
        <begin position="1"/>
        <end position="359"/>
    </location>
</feature>
<feature type="region of interest" description="Disordered" evidence="5">
    <location>
        <begin position="1"/>
        <end position="21"/>
    </location>
</feature>
<feature type="short sequence motif" description="DDXXD motif" evidence="3">
    <location>
        <begin position="112"/>
        <end position="116"/>
    </location>
</feature>
<feature type="short sequence motif" description="DDXXD motif" evidence="3">
    <location>
        <begin position="242"/>
        <end position="246"/>
    </location>
</feature>
<feature type="binding site" evidence="2">
    <location>
        <position position="73"/>
    </location>
    <ligand>
        <name>isopentenyl diphosphate</name>
        <dbReference type="ChEBI" id="CHEBI:128769"/>
    </ligand>
</feature>
<feature type="binding site" evidence="2">
    <location>
        <position position="76"/>
    </location>
    <ligand>
        <name>isopentenyl diphosphate</name>
        <dbReference type="ChEBI" id="CHEBI:128769"/>
    </ligand>
</feature>
<feature type="binding site" evidence="4">
    <location>
        <position position="105"/>
    </location>
    <ligand>
        <name>isopentenyl diphosphate</name>
        <dbReference type="ChEBI" id="CHEBI:128769"/>
    </ligand>
</feature>
<feature type="binding site" evidence="2">
    <location>
        <position position="112"/>
    </location>
    <ligand>
        <name>Mg(2+)</name>
        <dbReference type="ChEBI" id="CHEBI:18420"/>
        <label>1</label>
    </ligand>
</feature>
<feature type="binding site" evidence="2">
    <location>
        <position position="112"/>
    </location>
    <ligand>
        <name>Mg(2+)</name>
        <dbReference type="ChEBI" id="CHEBI:18420"/>
        <label>2</label>
    </ligand>
</feature>
<feature type="binding site" evidence="2">
    <location>
        <position position="116"/>
    </location>
    <ligand>
        <name>Mg(2+)</name>
        <dbReference type="ChEBI" id="CHEBI:18420"/>
        <label>1</label>
    </ligand>
</feature>
<feature type="binding site" evidence="2">
    <location>
        <position position="116"/>
    </location>
    <ligand>
        <name>Mg(2+)</name>
        <dbReference type="ChEBI" id="CHEBI:18420"/>
        <label>2</label>
    </ligand>
</feature>
<feature type="binding site" evidence="1">
    <location>
        <position position="121"/>
    </location>
    <ligand>
        <name>(2E)-geranyl diphosphate</name>
        <dbReference type="ChEBI" id="CHEBI:58057"/>
    </ligand>
</feature>
<feature type="binding site" evidence="2">
    <location>
        <position position="122"/>
    </location>
    <ligand>
        <name>isopentenyl diphosphate</name>
        <dbReference type="ChEBI" id="CHEBI:128769"/>
    </ligand>
</feature>
<feature type="binding site" evidence="1">
    <location>
        <position position="201"/>
    </location>
    <ligand>
        <name>(2E)-geranyl diphosphate</name>
        <dbReference type="ChEBI" id="CHEBI:58057"/>
    </ligand>
</feature>
<feature type="binding site" evidence="1">
    <location>
        <position position="202"/>
    </location>
    <ligand>
        <name>(2E)-geranyl diphosphate</name>
        <dbReference type="ChEBI" id="CHEBI:58057"/>
    </ligand>
</feature>
<feature type="binding site" evidence="1">
    <location>
        <position position="239"/>
    </location>
    <ligand>
        <name>(2E)-geranyl diphosphate</name>
        <dbReference type="ChEBI" id="CHEBI:58057"/>
    </ligand>
</feature>
<feature type="binding site" evidence="1">
    <location>
        <position position="256"/>
    </location>
    <ligand>
        <name>(2E)-geranyl diphosphate</name>
        <dbReference type="ChEBI" id="CHEBI:58057"/>
    </ligand>
</feature>
<feature type="binding site" evidence="1">
    <location>
        <position position="266"/>
    </location>
    <ligand>
        <name>(2E)-geranyl diphosphate</name>
        <dbReference type="ChEBI" id="CHEBI:58057"/>
    </ligand>
</feature>
<protein>
    <recommendedName>
        <fullName evidence="3">(2E,6E)-farnesyl diphosphate synthase</fullName>
        <shortName evidence="3">E,E-FPP synthase</shortName>
        <shortName evidence="3">FPP synthase</shortName>
        <ecNumber evidence="3">2.5.1.10</ecNumber>
    </recommendedName>
</protein>
<proteinExistence type="inferred from homology"/>
<reference key="1">
    <citation type="journal article" date="2002" name="J. Bacteriol.">
        <title>Whole-genome comparison of Mycobacterium tuberculosis clinical and laboratory strains.</title>
        <authorList>
            <person name="Fleischmann R.D."/>
            <person name="Alland D."/>
            <person name="Eisen J.A."/>
            <person name="Carpenter L."/>
            <person name="White O."/>
            <person name="Peterson J.D."/>
            <person name="DeBoy R.T."/>
            <person name="Dodson R.J."/>
            <person name="Gwinn M.L."/>
            <person name="Haft D.H."/>
            <person name="Hickey E.K."/>
            <person name="Kolonay J.F."/>
            <person name="Nelson W.C."/>
            <person name="Umayam L.A."/>
            <person name="Ermolaeva M.D."/>
            <person name="Salzberg S.L."/>
            <person name="Delcher A."/>
            <person name="Utterback T.R."/>
            <person name="Weidman J.F."/>
            <person name="Khouri H.M."/>
            <person name="Gill J."/>
            <person name="Mikula A."/>
            <person name="Bishai W."/>
            <person name="Jacobs W.R. Jr."/>
            <person name="Venter J.C."/>
            <person name="Fraser C.M."/>
        </authorList>
    </citation>
    <scope>NUCLEOTIDE SEQUENCE [LARGE SCALE GENOMIC DNA]</scope>
    <source>
        <strain>CDC 1551 / Oshkosh</strain>
    </source>
</reference>
<gene>
    <name type="ordered locus">MT3506</name>
</gene>
<name>FPPS_MYCTO</name>
<organism>
    <name type="scientific">Mycobacterium tuberculosis (strain CDC 1551 / Oshkosh)</name>
    <dbReference type="NCBI Taxonomy" id="83331"/>
    <lineage>
        <taxon>Bacteria</taxon>
        <taxon>Bacillati</taxon>
        <taxon>Actinomycetota</taxon>
        <taxon>Actinomycetes</taxon>
        <taxon>Mycobacteriales</taxon>
        <taxon>Mycobacteriaceae</taxon>
        <taxon>Mycobacterium</taxon>
        <taxon>Mycobacterium tuberculosis complex</taxon>
    </lineage>
</organism>